<accession>A3DBA0</accession>
<evidence type="ECO:0000250" key="1"/>
<evidence type="ECO:0000255" key="2">
    <source>
        <dbReference type="HAMAP-Rule" id="MF_00118"/>
    </source>
</evidence>
<evidence type="ECO:0000305" key="3"/>
<name>EFTU2_SHEB5</name>
<geneLocation type="plasmid">
    <name>pSbal03</name>
</geneLocation>
<organism>
    <name type="scientific">Shewanella baltica (strain OS155 / ATCC BAA-1091)</name>
    <dbReference type="NCBI Taxonomy" id="325240"/>
    <lineage>
        <taxon>Bacteria</taxon>
        <taxon>Pseudomonadati</taxon>
        <taxon>Pseudomonadota</taxon>
        <taxon>Gammaproteobacteria</taxon>
        <taxon>Alteromonadales</taxon>
        <taxon>Shewanellaceae</taxon>
        <taxon>Shewanella</taxon>
    </lineage>
</organism>
<feature type="chain" id="PRO_0000337520" description="Elongation factor Tu 2">
    <location>
        <begin position="1"/>
        <end position="394"/>
    </location>
</feature>
<feature type="domain" description="tr-type G">
    <location>
        <begin position="10"/>
        <end position="204"/>
    </location>
</feature>
<feature type="region of interest" description="G1" evidence="1">
    <location>
        <begin position="19"/>
        <end position="26"/>
    </location>
</feature>
<feature type="region of interest" description="G2" evidence="1">
    <location>
        <begin position="60"/>
        <end position="64"/>
    </location>
</feature>
<feature type="region of interest" description="G3" evidence="1">
    <location>
        <begin position="81"/>
        <end position="84"/>
    </location>
</feature>
<feature type="region of interest" description="G4" evidence="1">
    <location>
        <begin position="136"/>
        <end position="139"/>
    </location>
</feature>
<feature type="region of interest" description="G5" evidence="1">
    <location>
        <begin position="174"/>
        <end position="176"/>
    </location>
</feature>
<feature type="binding site" evidence="2">
    <location>
        <begin position="19"/>
        <end position="26"/>
    </location>
    <ligand>
        <name>GTP</name>
        <dbReference type="ChEBI" id="CHEBI:37565"/>
    </ligand>
</feature>
<feature type="binding site" evidence="2">
    <location>
        <position position="26"/>
    </location>
    <ligand>
        <name>Mg(2+)</name>
        <dbReference type="ChEBI" id="CHEBI:18420"/>
    </ligand>
</feature>
<feature type="binding site" evidence="2">
    <location>
        <begin position="81"/>
        <end position="85"/>
    </location>
    <ligand>
        <name>GTP</name>
        <dbReference type="ChEBI" id="CHEBI:37565"/>
    </ligand>
</feature>
<feature type="binding site" evidence="2">
    <location>
        <begin position="136"/>
        <end position="139"/>
    </location>
    <ligand>
        <name>GTP</name>
        <dbReference type="ChEBI" id="CHEBI:37565"/>
    </ligand>
</feature>
<gene>
    <name evidence="2" type="primary">tuf2</name>
    <name type="ordered locus">Sbal_4468</name>
</gene>
<keyword id="KW-0963">Cytoplasm</keyword>
<keyword id="KW-0251">Elongation factor</keyword>
<keyword id="KW-0342">GTP-binding</keyword>
<keyword id="KW-0378">Hydrolase</keyword>
<keyword id="KW-0460">Magnesium</keyword>
<keyword id="KW-0479">Metal-binding</keyword>
<keyword id="KW-0547">Nucleotide-binding</keyword>
<keyword id="KW-0614">Plasmid</keyword>
<keyword id="KW-0648">Protein biosynthesis</keyword>
<keyword id="KW-1185">Reference proteome</keyword>
<dbReference type="EC" id="3.6.5.3" evidence="2"/>
<dbReference type="EMBL" id="CP000566">
    <property type="protein sequence ID" value="ABN64013.1"/>
    <property type="status" value="ALT_INIT"/>
    <property type="molecule type" value="Genomic_DNA"/>
</dbReference>
<dbReference type="SMR" id="A3DBA0"/>
<dbReference type="KEGG" id="sbl:Sbal_4468"/>
<dbReference type="HOGENOM" id="CLU_007265_0_1_6"/>
<dbReference type="OrthoDB" id="9803139at2"/>
<dbReference type="Proteomes" id="UP000001557">
    <property type="component" value="Plasmid pSbal03"/>
</dbReference>
<dbReference type="GO" id="GO:0005829">
    <property type="term" value="C:cytosol"/>
    <property type="evidence" value="ECO:0007669"/>
    <property type="project" value="TreeGrafter"/>
</dbReference>
<dbReference type="GO" id="GO:0005525">
    <property type="term" value="F:GTP binding"/>
    <property type="evidence" value="ECO:0007669"/>
    <property type="project" value="UniProtKB-UniRule"/>
</dbReference>
<dbReference type="GO" id="GO:0003924">
    <property type="term" value="F:GTPase activity"/>
    <property type="evidence" value="ECO:0007669"/>
    <property type="project" value="InterPro"/>
</dbReference>
<dbReference type="GO" id="GO:0097216">
    <property type="term" value="F:guanosine tetraphosphate binding"/>
    <property type="evidence" value="ECO:0007669"/>
    <property type="project" value="UniProtKB-ARBA"/>
</dbReference>
<dbReference type="GO" id="GO:0003746">
    <property type="term" value="F:translation elongation factor activity"/>
    <property type="evidence" value="ECO:0007669"/>
    <property type="project" value="UniProtKB-UniRule"/>
</dbReference>
<dbReference type="CDD" id="cd01884">
    <property type="entry name" value="EF_Tu"/>
    <property type="match status" value="1"/>
</dbReference>
<dbReference type="CDD" id="cd03697">
    <property type="entry name" value="EFTU_II"/>
    <property type="match status" value="1"/>
</dbReference>
<dbReference type="CDD" id="cd03707">
    <property type="entry name" value="EFTU_III"/>
    <property type="match status" value="1"/>
</dbReference>
<dbReference type="FunFam" id="2.40.30.10:FF:000001">
    <property type="entry name" value="Elongation factor Tu"/>
    <property type="match status" value="1"/>
</dbReference>
<dbReference type="FunFam" id="3.40.50.300:FF:000003">
    <property type="entry name" value="Elongation factor Tu"/>
    <property type="match status" value="1"/>
</dbReference>
<dbReference type="Gene3D" id="3.40.50.300">
    <property type="entry name" value="P-loop containing nucleotide triphosphate hydrolases"/>
    <property type="match status" value="1"/>
</dbReference>
<dbReference type="Gene3D" id="2.40.30.10">
    <property type="entry name" value="Translation factors"/>
    <property type="match status" value="2"/>
</dbReference>
<dbReference type="HAMAP" id="MF_00118_B">
    <property type="entry name" value="EF_Tu_B"/>
    <property type="match status" value="1"/>
</dbReference>
<dbReference type="InterPro" id="IPR041709">
    <property type="entry name" value="EF-Tu_GTP-bd"/>
</dbReference>
<dbReference type="InterPro" id="IPR050055">
    <property type="entry name" value="EF-Tu_GTPase"/>
</dbReference>
<dbReference type="InterPro" id="IPR004161">
    <property type="entry name" value="EFTu-like_2"/>
</dbReference>
<dbReference type="InterPro" id="IPR033720">
    <property type="entry name" value="EFTU_2"/>
</dbReference>
<dbReference type="InterPro" id="IPR031157">
    <property type="entry name" value="G_TR_CS"/>
</dbReference>
<dbReference type="InterPro" id="IPR027417">
    <property type="entry name" value="P-loop_NTPase"/>
</dbReference>
<dbReference type="InterPro" id="IPR005225">
    <property type="entry name" value="Small_GTP-bd"/>
</dbReference>
<dbReference type="InterPro" id="IPR000795">
    <property type="entry name" value="T_Tr_GTP-bd_dom"/>
</dbReference>
<dbReference type="InterPro" id="IPR009000">
    <property type="entry name" value="Transl_B-barrel_sf"/>
</dbReference>
<dbReference type="InterPro" id="IPR009001">
    <property type="entry name" value="Transl_elong_EF1A/Init_IF2_C"/>
</dbReference>
<dbReference type="InterPro" id="IPR004541">
    <property type="entry name" value="Transl_elong_EFTu/EF1A_bac/org"/>
</dbReference>
<dbReference type="InterPro" id="IPR004160">
    <property type="entry name" value="Transl_elong_EFTu/EF1A_C"/>
</dbReference>
<dbReference type="NCBIfam" id="TIGR00485">
    <property type="entry name" value="EF-Tu"/>
    <property type="match status" value="1"/>
</dbReference>
<dbReference type="NCBIfam" id="NF000766">
    <property type="entry name" value="PRK00049.1"/>
    <property type="match status" value="1"/>
</dbReference>
<dbReference type="NCBIfam" id="NF009372">
    <property type="entry name" value="PRK12735.1"/>
    <property type="match status" value="1"/>
</dbReference>
<dbReference type="NCBIfam" id="NF009373">
    <property type="entry name" value="PRK12736.1"/>
    <property type="match status" value="1"/>
</dbReference>
<dbReference type="NCBIfam" id="TIGR00231">
    <property type="entry name" value="small_GTP"/>
    <property type="match status" value="1"/>
</dbReference>
<dbReference type="PANTHER" id="PTHR43721:SF22">
    <property type="entry name" value="ELONGATION FACTOR TU, MITOCHONDRIAL"/>
    <property type="match status" value="1"/>
</dbReference>
<dbReference type="PANTHER" id="PTHR43721">
    <property type="entry name" value="ELONGATION FACTOR TU-RELATED"/>
    <property type="match status" value="1"/>
</dbReference>
<dbReference type="Pfam" id="PF00009">
    <property type="entry name" value="GTP_EFTU"/>
    <property type="match status" value="1"/>
</dbReference>
<dbReference type="Pfam" id="PF03144">
    <property type="entry name" value="GTP_EFTU_D2"/>
    <property type="match status" value="1"/>
</dbReference>
<dbReference type="Pfam" id="PF03143">
    <property type="entry name" value="GTP_EFTU_D3"/>
    <property type="match status" value="1"/>
</dbReference>
<dbReference type="PRINTS" id="PR00315">
    <property type="entry name" value="ELONGATNFCT"/>
</dbReference>
<dbReference type="SUPFAM" id="SSF50465">
    <property type="entry name" value="EF-Tu/eEF-1alpha/eIF2-gamma C-terminal domain"/>
    <property type="match status" value="1"/>
</dbReference>
<dbReference type="SUPFAM" id="SSF52540">
    <property type="entry name" value="P-loop containing nucleoside triphosphate hydrolases"/>
    <property type="match status" value="1"/>
</dbReference>
<dbReference type="SUPFAM" id="SSF50447">
    <property type="entry name" value="Translation proteins"/>
    <property type="match status" value="1"/>
</dbReference>
<dbReference type="PROSITE" id="PS00301">
    <property type="entry name" value="G_TR_1"/>
    <property type="match status" value="1"/>
</dbReference>
<dbReference type="PROSITE" id="PS51722">
    <property type="entry name" value="G_TR_2"/>
    <property type="match status" value="1"/>
</dbReference>
<protein>
    <recommendedName>
        <fullName evidence="2">Elongation factor Tu 2</fullName>
        <shortName evidence="2">EF-Tu 2</shortName>
        <ecNumber evidence="2">3.6.5.3</ecNumber>
    </recommendedName>
</protein>
<reference key="1">
    <citation type="submission" date="2007-02" db="EMBL/GenBank/DDBJ databases">
        <title>Complete sequence of plasmid pSbal03 of Shewanella baltica OS155.</title>
        <authorList>
            <consortium name="US DOE Joint Genome Institute"/>
            <person name="Copeland A."/>
            <person name="Lucas S."/>
            <person name="Lapidus A."/>
            <person name="Barry K."/>
            <person name="Detter J.C."/>
            <person name="Glavina del Rio T."/>
            <person name="Hammon N."/>
            <person name="Israni S."/>
            <person name="Dalin E."/>
            <person name="Tice H."/>
            <person name="Pitluck S."/>
            <person name="Sims D.R."/>
            <person name="Brettin T."/>
            <person name="Bruce D."/>
            <person name="Han C."/>
            <person name="Tapia R."/>
            <person name="Brainard J."/>
            <person name="Schmutz J."/>
            <person name="Larimer F."/>
            <person name="Land M."/>
            <person name="Hauser L."/>
            <person name="Kyrpides N."/>
            <person name="Mikhailova N."/>
            <person name="Brettar I."/>
            <person name="Klappenbach J."/>
            <person name="Konstantinidis K."/>
            <person name="Rodrigues J."/>
            <person name="Tiedje J."/>
            <person name="Richardson P."/>
        </authorList>
    </citation>
    <scope>NUCLEOTIDE SEQUENCE [LARGE SCALE GENOMIC DNA]</scope>
    <source>
        <strain>OS155 / ATCC BAA-1091</strain>
    </source>
</reference>
<comment type="function">
    <text evidence="2">GTP hydrolase that promotes the GTP-dependent binding of aminoacyl-tRNA to the A-site of ribosomes during protein biosynthesis.</text>
</comment>
<comment type="catalytic activity">
    <reaction evidence="2">
        <text>GTP + H2O = GDP + phosphate + H(+)</text>
        <dbReference type="Rhea" id="RHEA:19669"/>
        <dbReference type="ChEBI" id="CHEBI:15377"/>
        <dbReference type="ChEBI" id="CHEBI:15378"/>
        <dbReference type="ChEBI" id="CHEBI:37565"/>
        <dbReference type="ChEBI" id="CHEBI:43474"/>
        <dbReference type="ChEBI" id="CHEBI:58189"/>
        <dbReference type="EC" id="3.6.5.3"/>
    </reaction>
    <physiologicalReaction direction="left-to-right" evidence="2">
        <dbReference type="Rhea" id="RHEA:19670"/>
    </physiologicalReaction>
</comment>
<comment type="subunit">
    <text evidence="2">Monomer.</text>
</comment>
<comment type="subcellular location">
    <subcellularLocation>
        <location evidence="2">Cytoplasm</location>
    </subcellularLocation>
</comment>
<comment type="similarity">
    <text evidence="2">Belongs to the TRAFAC class translation factor GTPase superfamily. Classic translation factor GTPase family. EF-Tu/EF-1A subfamily.</text>
</comment>
<comment type="sequence caution" evidence="3">
    <conflict type="erroneous initiation">
        <sequence resource="EMBL-CDS" id="ABN64013"/>
    </conflict>
</comment>
<proteinExistence type="inferred from homology"/>
<sequence length="394" mass="43335">MAKAKFERIKPHVNVGTIGHVDHGKTTLTAAISHVLAKTYGGEAKDFSQIDNAPEERERGITINTSHIEYDTPSRHYAHVDCPGHADYVKNMITGAAQMDGAILVVASTDGPMPQTREHILLSRQVGVPYIIVFMNKCDMVDDEELLELVEMEVRELLSEYDFPGDDLPVIQGSALKALEGQPEWEAKIIELANALDSYIPEPQRDIDKPFLLPIEDVFSISGRGTVVTGRVERGIVKVGDEVEIVGVRTTTKTTCTGVEMFRKLLDEGRAGENCGVLLRGTKRDDVERGQVLAKPGSINPHTTFESEVYVLSKEEGGRHTPFFKGYRPQFYFRTTDVTGTIELPEGVEMVMPGDNIKMVVTLICPIAMDEGLRFAIREGGRTVGAGVVAKIIA</sequence>